<accession>B7HTQ3</accession>
<gene>
    <name type="ordered locus">BCAH187_A4932</name>
</gene>
<feature type="chain" id="PRO_1000122617" description="Putative membrane protein insertion efficiency factor">
    <location>
        <begin position="1"/>
        <end position="78"/>
    </location>
</feature>
<sequence>MKQIFIGIIRFYQKFISPMTPPTCRFYPTCSHYGLEAFQKHGALKGFWLTCKRILKCHPFHPGGFDPVPDKKDDKVHS</sequence>
<reference key="1">
    <citation type="submission" date="2008-10" db="EMBL/GenBank/DDBJ databases">
        <title>Genome sequence of Bacillus cereus AH187.</title>
        <authorList>
            <person name="Dodson R.J."/>
            <person name="Durkin A.S."/>
            <person name="Rosovitz M.J."/>
            <person name="Rasko D.A."/>
            <person name="Kolsto A.B."/>
            <person name="Okstad O.A."/>
            <person name="Ravel J."/>
            <person name="Sutton G."/>
        </authorList>
    </citation>
    <scope>NUCLEOTIDE SEQUENCE [LARGE SCALE GENOMIC DNA]</scope>
    <source>
        <strain>AH187</strain>
    </source>
</reference>
<name>YIDD_BACC7</name>
<evidence type="ECO:0000255" key="1">
    <source>
        <dbReference type="HAMAP-Rule" id="MF_00386"/>
    </source>
</evidence>
<protein>
    <recommendedName>
        <fullName evidence="1">Putative membrane protein insertion efficiency factor</fullName>
    </recommendedName>
</protein>
<keyword id="KW-1003">Cell membrane</keyword>
<keyword id="KW-0472">Membrane</keyword>
<comment type="function">
    <text evidence="1">Could be involved in insertion of integral membrane proteins into the membrane.</text>
</comment>
<comment type="subcellular location">
    <subcellularLocation>
        <location evidence="1">Cell membrane</location>
        <topology evidence="1">Peripheral membrane protein</topology>
        <orientation evidence="1">Cytoplasmic side</orientation>
    </subcellularLocation>
</comment>
<comment type="similarity">
    <text evidence="1">Belongs to the UPF0161 family.</text>
</comment>
<dbReference type="EMBL" id="CP001177">
    <property type="protein sequence ID" value="ACJ80206.1"/>
    <property type="molecule type" value="Genomic_DNA"/>
</dbReference>
<dbReference type="KEGG" id="bcr:BCAH187_A4932"/>
<dbReference type="HOGENOM" id="CLU_144811_6_0_9"/>
<dbReference type="Proteomes" id="UP000002214">
    <property type="component" value="Chromosome"/>
</dbReference>
<dbReference type="GO" id="GO:0005886">
    <property type="term" value="C:plasma membrane"/>
    <property type="evidence" value="ECO:0007669"/>
    <property type="project" value="UniProtKB-SubCell"/>
</dbReference>
<dbReference type="HAMAP" id="MF_00386">
    <property type="entry name" value="UPF0161_YidD"/>
    <property type="match status" value="1"/>
</dbReference>
<dbReference type="InterPro" id="IPR002696">
    <property type="entry name" value="Membr_insert_effic_factor_YidD"/>
</dbReference>
<dbReference type="NCBIfam" id="TIGR00278">
    <property type="entry name" value="membrane protein insertion efficiency factor YidD"/>
    <property type="match status" value="1"/>
</dbReference>
<dbReference type="PANTHER" id="PTHR33383">
    <property type="entry name" value="MEMBRANE PROTEIN INSERTION EFFICIENCY FACTOR-RELATED"/>
    <property type="match status" value="1"/>
</dbReference>
<dbReference type="PANTHER" id="PTHR33383:SF1">
    <property type="entry name" value="MEMBRANE PROTEIN INSERTION EFFICIENCY FACTOR-RELATED"/>
    <property type="match status" value="1"/>
</dbReference>
<dbReference type="Pfam" id="PF01809">
    <property type="entry name" value="YidD"/>
    <property type="match status" value="1"/>
</dbReference>
<dbReference type="SMART" id="SM01234">
    <property type="entry name" value="Haemolytic"/>
    <property type="match status" value="1"/>
</dbReference>
<proteinExistence type="inferred from homology"/>
<organism>
    <name type="scientific">Bacillus cereus (strain AH187)</name>
    <dbReference type="NCBI Taxonomy" id="405534"/>
    <lineage>
        <taxon>Bacteria</taxon>
        <taxon>Bacillati</taxon>
        <taxon>Bacillota</taxon>
        <taxon>Bacilli</taxon>
        <taxon>Bacillales</taxon>
        <taxon>Bacillaceae</taxon>
        <taxon>Bacillus</taxon>
        <taxon>Bacillus cereus group</taxon>
    </lineage>
</organism>